<sequence length="825" mass="92489">MKILKLPWLTHQEGQRNYEIYTVDVSSDGQRVATGGLDGKIRIWSVADILVFAKPKVSWPAREEQLRKPLANMSRHTGSVTALKFSPDNKYLASGSDDKILLIWEKEEGAVQPLFDMENDLEHWNVRRRLVAHDNDIQDICWAPDSSILVTVGLDRSIIVWNGSTFEKIKRFDVHQSHVKGVVFDPANKYFATASDDRTVKVFRYHKGTDLSFTIEHIITEPFQGSPLTTYFRRLSWSPDGQHIAVPNATNGPVSTVAIISRGNWDTSVSLVGHDQPTEVACFNPRLFEHNDNHERGEEVDGASKDNSAASESSGKRRLKDDDRVDSVIATAGQDKTLAVWSTSRARPIFVAYDLTSKSVTDIAWTCDGTALFLTSLDGRIIVITFEEGELGKAIPLEQNVEQLHRYGVDKDSLVFPESVKQLILEDKARQYKKPYIETTLLESRIGTVKKPNVLNPRPKHAKNDVAVASIPQAQAPALKKKEGPLNAATVQNGKKRVAPTLISTGYARAATVKFEPRSSIDSDFAGKKEPLKDTSYALAGKISQPSLPLPRLGVHTLIMGVKERGAERFYVEDEESMDDDAEVADEEDETKNEHPLTLNLKTTPERVWKDEPNLRYLEYPGVIPDADVVICQYGDLDDLHILEIRNGVERSIQFDREALFENPTKILGYHQGERTLEAFLPEVVISCVGSKACQCWALATASGSLYIYGNHGQLLVPKISIGHKVIKLIAWQHFVIAFTETCLFWIWDIRAMKLVEKEISVLPVLVQDQPQCNRVRISRRILDFRMLADSHELLVEMSDGASYVWKRALGCWTDTIGQSTPVTA</sequence>
<organism>
    <name type="scientific">Eremothecium gossypii (strain ATCC 10895 / CBS 109.51 / FGSC 9923 / NRRL Y-1056)</name>
    <name type="common">Yeast</name>
    <name type="synonym">Ashbya gossypii</name>
    <dbReference type="NCBI Taxonomy" id="284811"/>
    <lineage>
        <taxon>Eukaryota</taxon>
        <taxon>Fungi</taxon>
        <taxon>Dikarya</taxon>
        <taxon>Ascomycota</taxon>
        <taxon>Saccharomycotina</taxon>
        <taxon>Saccharomycetes</taxon>
        <taxon>Saccharomycetales</taxon>
        <taxon>Saccharomycetaceae</taxon>
        <taxon>Eremothecium</taxon>
    </lineage>
</organism>
<gene>
    <name type="primary">HIR1</name>
    <name type="ordered locus">AGR168W</name>
</gene>
<comment type="function">
    <text evidence="1">Required for replication-independent chromatin assembly and for the periodic repression of histone gene transcription during the cell cycle.</text>
</comment>
<comment type="subcellular location">
    <subcellularLocation>
        <location evidence="1">Nucleus</location>
    </subcellularLocation>
</comment>
<comment type="similarity">
    <text evidence="3">Belongs to the WD repeat HIR1 family.</text>
</comment>
<protein>
    <recommendedName>
        <fullName>Protein HIR1</fullName>
    </recommendedName>
</protein>
<dbReference type="EMBL" id="AE016820">
    <property type="protein sequence ID" value="AAS54658.2"/>
    <property type="molecule type" value="Genomic_DNA"/>
</dbReference>
<dbReference type="RefSeq" id="NP_986834.2">
    <property type="nucleotide sequence ID" value="NM_211896.2"/>
</dbReference>
<dbReference type="SMR" id="Q74ZN0"/>
<dbReference type="FunCoup" id="Q74ZN0">
    <property type="interactions" value="211"/>
</dbReference>
<dbReference type="STRING" id="284811.Q74ZN0"/>
<dbReference type="EnsemblFungi" id="AAS54658">
    <property type="protein sequence ID" value="AAS54658"/>
    <property type="gene ID" value="AGOS_AGR168W"/>
</dbReference>
<dbReference type="GeneID" id="4623136"/>
<dbReference type="KEGG" id="ago:AGOS_AGR168W"/>
<dbReference type="eggNOG" id="KOG0973">
    <property type="taxonomic scope" value="Eukaryota"/>
</dbReference>
<dbReference type="HOGENOM" id="CLU_004372_3_0_1"/>
<dbReference type="InParanoid" id="Q74ZN0"/>
<dbReference type="OMA" id="KRFDVHQ"/>
<dbReference type="OrthoDB" id="1741719at2759"/>
<dbReference type="Proteomes" id="UP000000591">
    <property type="component" value="Chromosome VII"/>
</dbReference>
<dbReference type="GO" id="GO:0000785">
    <property type="term" value="C:chromatin"/>
    <property type="evidence" value="ECO:0000318"/>
    <property type="project" value="GO_Central"/>
</dbReference>
<dbReference type="GO" id="GO:0000775">
    <property type="term" value="C:chromosome, centromeric region"/>
    <property type="evidence" value="ECO:0007669"/>
    <property type="project" value="EnsemblFungi"/>
</dbReference>
<dbReference type="GO" id="GO:0000417">
    <property type="term" value="C:HIR complex"/>
    <property type="evidence" value="ECO:0000318"/>
    <property type="project" value="GO_Central"/>
</dbReference>
<dbReference type="GO" id="GO:0005634">
    <property type="term" value="C:nucleus"/>
    <property type="evidence" value="ECO:0007669"/>
    <property type="project" value="UniProtKB-SubCell"/>
</dbReference>
<dbReference type="GO" id="GO:0003677">
    <property type="term" value="F:DNA binding"/>
    <property type="evidence" value="ECO:0007669"/>
    <property type="project" value="EnsemblFungi"/>
</dbReference>
<dbReference type="GO" id="GO:0042802">
    <property type="term" value="F:identical protein binding"/>
    <property type="evidence" value="ECO:0007669"/>
    <property type="project" value="EnsemblFungi"/>
</dbReference>
<dbReference type="GO" id="GO:0031491">
    <property type="term" value="F:nucleosome binding"/>
    <property type="evidence" value="ECO:0007669"/>
    <property type="project" value="EnsemblFungi"/>
</dbReference>
<dbReference type="GO" id="GO:0003714">
    <property type="term" value="F:transcription corepressor activity"/>
    <property type="evidence" value="ECO:0007669"/>
    <property type="project" value="EnsemblFungi"/>
</dbReference>
<dbReference type="GO" id="GO:0006338">
    <property type="term" value="P:chromatin remodeling"/>
    <property type="evidence" value="ECO:0000318"/>
    <property type="project" value="GO_Central"/>
</dbReference>
<dbReference type="GO" id="GO:0016539">
    <property type="term" value="P:intein-mediated protein splicing"/>
    <property type="evidence" value="ECO:0007669"/>
    <property type="project" value="InterPro"/>
</dbReference>
<dbReference type="GO" id="GO:1905268">
    <property type="term" value="P:negative regulation of chromatin organization"/>
    <property type="evidence" value="ECO:0007669"/>
    <property type="project" value="EnsemblFungi"/>
</dbReference>
<dbReference type="GO" id="GO:0000122">
    <property type="term" value="P:negative regulation of transcription by RNA polymerase II"/>
    <property type="evidence" value="ECO:0007669"/>
    <property type="project" value="EnsemblFungi"/>
</dbReference>
<dbReference type="GO" id="GO:0016480">
    <property type="term" value="P:negative regulation of transcription by RNA polymerase III"/>
    <property type="evidence" value="ECO:0007669"/>
    <property type="project" value="EnsemblFungi"/>
</dbReference>
<dbReference type="GO" id="GO:0006334">
    <property type="term" value="P:nucleosome assembly"/>
    <property type="evidence" value="ECO:0007669"/>
    <property type="project" value="EnsemblFungi"/>
</dbReference>
<dbReference type="GO" id="GO:0006368">
    <property type="term" value="P:transcription elongation by RNA polymerase II"/>
    <property type="evidence" value="ECO:0007669"/>
    <property type="project" value="EnsemblFungi"/>
</dbReference>
<dbReference type="CDD" id="cd00200">
    <property type="entry name" value="WD40"/>
    <property type="match status" value="1"/>
</dbReference>
<dbReference type="FunFam" id="2.130.10.10:FF:000290">
    <property type="entry name" value="Protein HIR"/>
    <property type="match status" value="1"/>
</dbReference>
<dbReference type="FunFam" id="2.130.10.10:FF:001073">
    <property type="entry name" value="Protein HIR"/>
    <property type="match status" value="1"/>
</dbReference>
<dbReference type="Gene3D" id="2.130.10.10">
    <property type="entry name" value="YVTN repeat-like/Quinoprotein amine dehydrogenase"/>
    <property type="match status" value="2"/>
</dbReference>
<dbReference type="InterPro" id="IPR055410">
    <property type="entry name" value="CAF1B_HIR1_beta-prop"/>
</dbReference>
<dbReference type="InterPro" id="IPR031120">
    <property type="entry name" value="HIR1-like"/>
</dbReference>
<dbReference type="InterPro" id="IPR011494">
    <property type="entry name" value="HIRA-like_C"/>
</dbReference>
<dbReference type="InterPro" id="IPR019015">
    <property type="entry name" value="HIRA_B_motif"/>
</dbReference>
<dbReference type="InterPro" id="IPR006141">
    <property type="entry name" value="Intein_N"/>
</dbReference>
<dbReference type="InterPro" id="IPR015943">
    <property type="entry name" value="WD40/YVTN_repeat-like_dom_sf"/>
</dbReference>
<dbReference type="InterPro" id="IPR036322">
    <property type="entry name" value="WD40_repeat_dom_sf"/>
</dbReference>
<dbReference type="InterPro" id="IPR001680">
    <property type="entry name" value="WD40_rpt"/>
</dbReference>
<dbReference type="PANTHER" id="PTHR13831">
    <property type="entry name" value="MEMBER OF THE HIR1 FAMILY OF WD-REPEAT PROTEINS"/>
    <property type="match status" value="1"/>
</dbReference>
<dbReference type="PANTHER" id="PTHR13831:SF0">
    <property type="entry name" value="PROTEIN HIRA"/>
    <property type="match status" value="1"/>
</dbReference>
<dbReference type="Pfam" id="PF24105">
    <property type="entry name" value="Beta-prop_CAF1B_HIR1"/>
    <property type="match status" value="1"/>
</dbReference>
<dbReference type="Pfam" id="PF07569">
    <property type="entry name" value="Hira"/>
    <property type="match status" value="1"/>
</dbReference>
<dbReference type="Pfam" id="PF09453">
    <property type="entry name" value="HIRA_B"/>
    <property type="match status" value="1"/>
</dbReference>
<dbReference type="SMART" id="SM00320">
    <property type="entry name" value="WD40"/>
    <property type="match status" value="6"/>
</dbReference>
<dbReference type="SUPFAM" id="SSF50978">
    <property type="entry name" value="WD40 repeat-like"/>
    <property type="match status" value="1"/>
</dbReference>
<dbReference type="PROSITE" id="PS00678">
    <property type="entry name" value="WD_REPEATS_1"/>
    <property type="match status" value="1"/>
</dbReference>
<dbReference type="PROSITE" id="PS50082">
    <property type="entry name" value="WD_REPEATS_2"/>
    <property type="match status" value="4"/>
</dbReference>
<dbReference type="PROSITE" id="PS50294">
    <property type="entry name" value="WD_REPEATS_REGION"/>
    <property type="match status" value="1"/>
</dbReference>
<reference key="1">
    <citation type="journal article" date="2004" name="Science">
        <title>The Ashbya gossypii genome as a tool for mapping the ancient Saccharomyces cerevisiae genome.</title>
        <authorList>
            <person name="Dietrich F.S."/>
            <person name="Voegeli S."/>
            <person name="Brachat S."/>
            <person name="Lerch A."/>
            <person name="Gates K."/>
            <person name="Steiner S."/>
            <person name="Mohr C."/>
            <person name="Poehlmann R."/>
            <person name="Luedi P."/>
            <person name="Choi S."/>
            <person name="Wing R.A."/>
            <person name="Flavier A."/>
            <person name="Gaffney T.D."/>
            <person name="Philippsen P."/>
        </authorList>
    </citation>
    <scope>NUCLEOTIDE SEQUENCE [LARGE SCALE GENOMIC DNA]</scope>
    <source>
        <strain>ATCC 10895 / CBS 109.51 / FGSC 9923 / NRRL Y-1056</strain>
    </source>
</reference>
<reference key="2">
    <citation type="journal article" date="2013" name="G3 (Bethesda)">
        <title>Genomes of Ashbya fungi isolated from insects reveal four mating-type loci, numerous translocations, lack of transposons, and distinct gene duplications.</title>
        <authorList>
            <person name="Dietrich F.S."/>
            <person name="Voegeli S."/>
            <person name="Kuo S."/>
            <person name="Philippsen P."/>
        </authorList>
    </citation>
    <scope>GENOME REANNOTATION</scope>
    <scope>SEQUENCE REVISION TO 808</scope>
    <source>
        <strain>ATCC 10895 / CBS 109.51 / FGSC 9923 / NRRL Y-1056</strain>
    </source>
</reference>
<feature type="chain" id="PRO_0000286401" description="Protein HIR1">
    <location>
        <begin position="1"/>
        <end position="825"/>
    </location>
</feature>
<feature type="repeat" description="WD 1">
    <location>
        <begin position="15"/>
        <end position="54"/>
    </location>
</feature>
<feature type="repeat" description="WD 2">
    <location>
        <begin position="75"/>
        <end position="114"/>
    </location>
</feature>
<feature type="repeat" description="WD 3">
    <location>
        <begin position="132"/>
        <end position="171"/>
    </location>
</feature>
<feature type="repeat" description="WD 4">
    <location>
        <begin position="174"/>
        <end position="213"/>
    </location>
</feature>
<feature type="repeat" description="WD 5">
    <location>
        <begin position="227"/>
        <end position="270"/>
    </location>
</feature>
<feature type="repeat" description="WD 6">
    <location>
        <begin position="309"/>
        <end position="351"/>
    </location>
</feature>
<feature type="repeat" description="WD 7">
    <location>
        <begin position="355"/>
        <end position="396"/>
    </location>
</feature>
<feature type="region of interest" description="Disordered" evidence="2">
    <location>
        <begin position="294"/>
        <end position="320"/>
    </location>
</feature>
<feature type="region of interest" description="Disordered" evidence="2">
    <location>
        <begin position="574"/>
        <end position="595"/>
    </location>
</feature>
<feature type="compositionally biased region" description="Basic and acidic residues" evidence="2">
    <location>
        <begin position="294"/>
        <end position="304"/>
    </location>
</feature>
<feature type="compositionally biased region" description="Acidic residues" evidence="2">
    <location>
        <begin position="574"/>
        <end position="591"/>
    </location>
</feature>
<keyword id="KW-0156">Chromatin regulator</keyword>
<keyword id="KW-0539">Nucleus</keyword>
<keyword id="KW-1185">Reference proteome</keyword>
<keyword id="KW-0677">Repeat</keyword>
<keyword id="KW-0678">Repressor</keyword>
<keyword id="KW-0804">Transcription</keyword>
<keyword id="KW-0805">Transcription regulation</keyword>
<keyword id="KW-0853">WD repeat</keyword>
<name>HIR1_EREGS</name>
<accession>Q74ZN0</accession>
<evidence type="ECO:0000250" key="1"/>
<evidence type="ECO:0000256" key="2">
    <source>
        <dbReference type="SAM" id="MobiDB-lite"/>
    </source>
</evidence>
<evidence type="ECO:0000305" key="3"/>
<proteinExistence type="inferred from homology"/>